<comment type="subcellular location">
    <subcellularLocation>
        <location evidence="2">Cell membrane</location>
        <topology evidence="2">Multi-pass membrane protein</topology>
    </subcellularLocation>
</comment>
<comment type="similarity">
    <text evidence="2">Belongs to the UPF0324 family.</text>
</comment>
<keyword id="KW-1003">Cell membrane</keyword>
<keyword id="KW-0472">Membrane</keyword>
<keyword id="KW-1185">Reference proteome</keyword>
<keyword id="KW-0812">Transmembrane</keyword>
<keyword id="KW-1133">Transmembrane helix</keyword>
<organism>
    <name type="scientific">Nitratidesulfovibrio vulgaris (strain ATCC 29579 / DSM 644 / CCUG 34227 / NCIMB 8303 / VKM B-1760 / Hildenborough)</name>
    <name type="common">Desulfovibrio vulgaris</name>
    <dbReference type="NCBI Taxonomy" id="882"/>
    <lineage>
        <taxon>Bacteria</taxon>
        <taxon>Pseudomonadati</taxon>
        <taxon>Thermodesulfobacteriota</taxon>
        <taxon>Desulfovibrionia</taxon>
        <taxon>Desulfovibrionales</taxon>
        <taxon>Desulfovibrionaceae</taxon>
        <taxon>Nitratidesulfovibrio</taxon>
    </lineage>
</organism>
<evidence type="ECO:0000255" key="1"/>
<evidence type="ECO:0000305" key="2"/>
<reference key="1">
    <citation type="journal article" date="2004" name="Nat. Biotechnol.">
        <title>The genome sequence of the anaerobic, sulfate-reducing bacterium Desulfovibrio vulgaris Hildenborough.</title>
        <authorList>
            <person name="Heidelberg J.F."/>
            <person name="Seshadri R."/>
            <person name="Haveman S.A."/>
            <person name="Hemme C.L."/>
            <person name="Paulsen I.T."/>
            <person name="Kolonay J.F."/>
            <person name="Eisen J.A."/>
            <person name="Ward N.L."/>
            <person name="Methe B.A."/>
            <person name="Brinkac L.M."/>
            <person name="Daugherty S.C."/>
            <person name="DeBoy R.T."/>
            <person name="Dodson R.J."/>
            <person name="Durkin A.S."/>
            <person name="Madupu R."/>
            <person name="Nelson W.C."/>
            <person name="Sullivan S.A."/>
            <person name="Fouts D.E."/>
            <person name="Haft D.H."/>
            <person name="Selengut J."/>
            <person name="Peterson J.D."/>
            <person name="Davidsen T.M."/>
            <person name="Zafar N."/>
            <person name="Zhou L."/>
            <person name="Radune D."/>
            <person name="Dimitrov G."/>
            <person name="Hance M."/>
            <person name="Tran K."/>
            <person name="Khouri H.M."/>
            <person name="Gill J."/>
            <person name="Utterback T.R."/>
            <person name="Feldblyum T.V."/>
            <person name="Wall J.D."/>
            <person name="Voordouw G."/>
            <person name="Fraser C.M."/>
        </authorList>
    </citation>
    <scope>NUCLEOTIDE SEQUENCE [LARGE SCALE GENOMIC DNA]</scope>
    <source>
        <strain>ATCC 29579 / DSM 644 / CCUG 34227 / NCIMB 8303 / VKM B-1760 / Hildenborough</strain>
    </source>
</reference>
<name>Y123_NITV2</name>
<sequence>MSQNVISQPVEAQQSFARAVTESLPGLLLVCAVALVASFVAPKLEAYPLFKTYLSLKDFILAIIFGIIIRNTVGVPAVFQPGLRYSTIMTKTGIVIMGSSYSLAGLVSVGAQALVFIAVFLFGTALVMMWLCRKVGMSTPLAACLAAGMSVCGVSATIAIAPAVKAKNEDMAYSIAVVLMFGLLALIAFPLIGKVFNLTPEQFGAFAGVGIVNSAQVLAAGFGFSQEAGIVAGIYNIGRVVFLPFVVLMLAIMAAAQEAEQGNEVAKINKWQMIRDKFPLFVLGFLAIVCLNTAGVLTKPEVKMAKHFMEWAFLLGFASIGLTTRLSDLRAAGLNGFLFGFGVAGLKAALALAAVLLFMS</sequence>
<dbReference type="EMBL" id="AE017285">
    <property type="protein sequence ID" value="AAS94607.1"/>
    <property type="molecule type" value="Genomic_DNA"/>
</dbReference>
<dbReference type="RefSeq" id="WP_010937434.1">
    <property type="nucleotide sequence ID" value="NC_002937.3"/>
</dbReference>
<dbReference type="RefSeq" id="YP_009348.1">
    <property type="nucleotide sequence ID" value="NC_002937.3"/>
</dbReference>
<dbReference type="STRING" id="882.DVU_0123"/>
<dbReference type="PaxDb" id="882-DVU_0123"/>
<dbReference type="EnsemblBacteria" id="AAS94607">
    <property type="protein sequence ID" value="AAS94607"/>
    <property type="gene ID" value="DVU_0123"/>
</dbReference>
<dbReference type="KEGG" id="dvu:DVU_0123"/>
<dbReference type="PATRIC" id="fig|882.5.peg.120"/>
<dbReference type="eggNOG" id="COG2855">
    <property type="taxonomic scope" value="Bacteria"/>
</dbReference>
<dbReference type="HOGENOM" id="CLU_033541_1_0_7"/>
<dbReference type="OrthoDB" id="5393513at2"/>
<dbReference type="PhylomeDB" id="Q72FU0"/>
<dbReference type="Proteomes" id="UP000002194">
    <property type="component" value="Chromosome"/>
</dbReference>
<dbReference type="GO" id="GO:0005886">
    <property type="term" value="C:plasma membrane"/>
    <property type="evidence" value="ECO:0007669"/>
    <property type="project" value="UniProtKB-SubCell"/>
</dbReference>
<dbReference type="InterPro" id="IPR018383">
    <property type="entry name" value="UPF0324_pro"/>
</dbReference>
<dbReference type="PANTHER" id="PTHR30106">
    <property type="entry name" value="INNER MEMBRANE PROTEIN YEIH-RELATED"/>
    <property type="match status" value="1"/>
</dbReference>
<dbReference type="PANTHER" id="PTHR30106:SF2">
    <property type="entry name" value="UPF0324 INNER MEMBRANE PROTEIN YEIH"/>
    <property type="match status" value="1"/>
</dbReference>
<dbReference type="Pfam" id="PF03601">
    <property type="entry name" value="Cons_hypoth698"/>
    <property type="match status" value="1"/>
</dbReference>
<proteinExistence type="inferred from homology"/>
<feature type="chain" id="PRO_0000157410" description="UPF0324 membrane protein DVU_0123">
    <location>
        <begin position="1"/>
        <end position="360"/>
    </location>
</feature>
<feature type="transmembrane region" description="Helical" evidence="1">
    <location>
        <begin position="20"/>
        <end position="42"/>
    </location>
</feature>
<feature type="transmembrane region" description="Helical" evidence="1">
    <location>
        <begin position="57"/>
        <end position="79"/>
    </location>
</feature>
<feature type="transmembrane region" description="Helical" evidence="1">
    <location>
        <begin position="100"/>
        <end position="122"/>
    </location>
</feature>
<feature type="transmembrane region" description="Helical" evidence="1">
    <location>
        <begin position="142"/>
        <end position="164"/>
    </location>
</feature>
<feature type="transmembrane region" description="Helical" evidence="1">
    <location>
        <begin position="171"/>
        <end position="193"/>
    </location>
</feature>
<feature type="transmembrane region" description="Helical" evidence="1">
    <location>
        <begin position="203"/>
        <end position="225"/>
    </location>
</feature>
<feature type="transmembrane region" description="Helical" evidence="1">
    <location>
        <begin position="232"/>
        <end position="254"/>
    </location>
</feature>
<feature type="transmembrane region" description="Helical" evidence="1">
    <location>
        <begin position="278"/>
        <end position="297"/>
    </location>
</feature>
<feature type="transmembrane region" description="Helical" evidence="1">
    <location>
        <begin position="310"/>
        <end position="327"/>
    </location>
</feature>
<feature type="transmembrane region" description="Helical" evidence="1">
    <location>
        <begin position="337"/>
        <end position="359"/>
    </location>
</feature>
<protein>
    <recommendedName>
        <fullName>UPF0324 membrane protein DVU_0123</fullName>
    </recommendedName>
</protein>
<gene>
    <name type="ordered locus">DVU_0123</name>
</gene>
<accession>Q72FU0</accession>